<organism>
    <name type="scientific">Coprothermobacter proteolyticus (strain ATCC 35245 / DSM 5265 / OCM 4 / BT)</name>
    <dbReference type="NCBI Taxonomy" id="309798"/>
    <lineage>
        <taxon>Bacteria</taxon>
        <taxon>Pseudomonadati</taxon>
        <taxon>Coprothermobacterota</taxon>
        <taxon>Coprothermobacteria</taxon>
        <taxon>Coprothermobacterales</taxon>
        <taxon>Coprothermobacteraceae</taxon>
        <taxon>Coprothermobacter</taxon>
    </lineage>
</organism>
<proteinExistence type="inferred from homology"/>
<sequence>MYALLEIRGKQYKVKENSTILVPGWEEIKPEEVKVLMVKDEANTVVGTPFVEGAEIELEPVKQIRTKKIKVRRFKAKVNYHRKKSHRIRYTILRINGIKTSVLTEG</sequence>
<feature type="chain" id="PRO_1000143777" description="Large ribosomal subunit protein bL21">
    <location>
        <begin position="1"/>
        <end position="106"/>
    </location>
</feature>
<keyword id="KW-1185">Reference proteome</keyword>
<keyword id="KW-0687">Ribonucleoprotein</keyword>
<keyword id="KW-0689">Ribosomal protein</keyword>
<keyword id="KW-0694">RNA-binding</keyword>
<keyword id="KW-0699">rRNA-binding</keyword>
<evidence type="ECO:0000255" key="1">
    <source>
        <dbReference type="HAMAP-Rule" id="MF_01363"/>
    </source>
</evidence>
<evidence type="ECO:0000305" key="2"/>
<comment type="function">
    <text evidence="1">This protein binds to 23S rRNA in the presence of protein L20.</text>
</comment>
<comment type="subunit">
    <text evidence="1">Part of the 50S ribosomal subunit. Contacts protein L20.</text>
</comment>
<comment type="similarity">
    <text evidence="1">Belongs to the bacterial ribosomal protein bL21 family.</text>
</comment>
<reference key="1">
    <citation type="submission" date="2008-08" db="EMBL/GenBank/DDBJ databases">
        <title>The complete genome sequence of Coprothermobacter proteolyticus strain ATCC 5245 / DSM 5265 / BT.</title>
        <authorList>
            <person name="Dodson R.J."/>
            <person name="Durkin A.S."/>
            <person name="Wu M."/>
            <person name="Eisen J."/>
            <person name="Sutton G."/>
        </authorList>
    </citation>
    <scope>NUCLEOTIDE SEQUENCE [LARGE SCALE GENOMIC DNA]</scope>
    <source>
        <strain>ATCC 35245 / DSM 5265 / OCM 4 / BT</strain>
    </source>
</reference>
<accession>B5Y807</accession>
<name>RL21_COPPD</name>
<gene>
    <name evidence="1" type="primary">rplU</name>
    <name type="ordered locus">COPRO5265_0548</name>
</gene>
<dbReference type="EMBL" id="CP001145">
    <property type="protein sequence ID" value="ACI17855.1"/>
    <property type="molecule type" value="Genomic_DNA"/>
</dbReference>
<dbReference type="RefSeq" id="WP_012544506.1">
    <property type="nucleotide sequence ID" value="NC_011295.1"/>
</dbReference>
<dbReference type="SMR" id="B5Y807"/>
<dbReference type="STRING" id="309798.COPRO5265_0548"/>
<dbReference type="KEGG" id="cpo:COPRO5265_0548"/>
<dbReference type="eggNOG" id="COG0261">
    <property type="taxonomic scope" value="Bacteria"/>
</dbReference>
<dbReference type="HOGENOM" id="CLU_061463_3_3_9"/>
<dbReference type="OrthoDB" id="9813334at2"/>
<dbReference type="Proteomes" id="UP000001732">
    <property type="component" value="Chromosome"/>
</dbReference>
<dbReference type="GO" id="GO:0005737">
    <property type="term" value="C:cytoplasm"/>
    <property type="evidence" value="ECO:0007669"/>
    <property type="project" value="UniProtKB-ARBA"/>
</dbReference>
<dbReference type="GO" id="GO:1990904">
    <property type="term" value="C:ribonucleoprotein complex"/>
    <property type="evidence" value="ECO:0007669"/>
    <property type="project" value="UniProtKB-KW"/>
</dbReference>
<dbReference type="GO" id="GO:0005840">
    <property type="term" value="C:ribosome"/>
    <property type="evidence" value="ECO:0007669"/>
    <property type="project" value="UniProtKB-KW"/>
</dbReference>
<dbReference type="GO" id="GO:0019843">
    <property type="term" value="F:rRNA binding"/>
    <property type="evidence" value="ECO:0007669"/>
    <property type="project" value="UniProtKB-UniRule"/>
</dbReference>
<dbReference type="GO" id="GO:0003735">
    <property type="term" value="F:structural constituent of ribosome"/>
    <property type="evidence" value="ECO:0007669"/>
    <property type="project" value="InterPro"/>
</dbReference>
<dbReference type="GO" id="GO:0006412">
    <property type="term" value="P:translation"/>
    <property type="evidence" value="ECO:0007669"/>
    <property type="project" value="UniProtKB-UniRule"/>
</dbReference>
<dbReference type="HAMAP" id="MF_01363">
    <property type="entry name" value="Ribosomal_bL21"/>
    <property type="match status" value="1"/>
</dbReference>
<dbReference type="InterPro" id="IPR028909">
    <property type="entry name" value="bL21-like"/>
</dbReference>
<dbReference type="InterPro" id="IPR036164">
    <property type="entry name" value="bL21-like_sf"/>
</dbReference>
<dbReference type="InterPro" id="IPR001787">
    <property type="entry name" value="Ribosomal_bL21"/>
</dbReference>
<dbReference type="NCBIfam" id="TIGR00061">
    <property type="entry name" value="L21"/>
    <property type="match status" value="1"/>
</dbReference>
<dbReference type="PANTHER" id="PTHR21349">
    <property type="entry name" value="50S RIBOSOMAL PROTEIN L21"/>
    <property type="match status" value="1"/>
</dbReference>
<dbReference type="PANTHER" id="PTHR21349:SF0">
    <property type="entry name" value="LARGE RIBOSOMAL SUBUNIT PROTEIN BL21M"/>
    <property type="match status" value="1"/>
</dbReference>
<dbReference type="Pfam" id="PF00829">
    <property type="entry name" value="Ribosomal_L21p"/>
    <property type="match status" value="1"/>
</dbReference>
<dbReference type="SUPFAM" id="SSF141091">
    <property type="entry name" value="L21p-like"/>
    <property type="match status" value="1"/>
</dbReference>
<protein>
    <recommendedName>
        <fullName evidence="1">Large ribosomal subunit protein bL21</fullName>
    </recommendedName>
    <alternativeName>
        <fullName evidence="2">50S ribosomal protein L21</fullName>
    </alternativeName>
</protein>